<proteinExistence type="inferred from homology"/>
<gene>
    <name type="primary">ermG</name>
</gene>
<dbReference type="EC" id="2.1.1.-" evidence="1"/>
<dbReference type="EMBL" id="M15332">
    <property type="protein sequence ID" value="AAA22419.1"/>
    <property type="molecule type" value="Genomic_DNA"/>
</dbReference>
<dbReference type="PIR" id="C26930">
    <property type="entry name" value="C26930"/>
</dbReference>
<dbReference type="RefSeq" id="WP_014387027.1">
    <property type="nucleotide sequence ID" value="NG_047827.1"/>
</dbReference>
<dbReference type="SMR" id="P06571"/>
<dbReference type="GeneID" id="90532633"/>
<dbReference type="KEGG" id="ag:AAA22419"/>
<dbReference type="GO" id="GO:0005829">
    <property type="term" value="C:cytosol"/>
    <property type="evidence" value="ECO:0007669"/>
    <property type="project" value="TreeGrafter"/>
</dbReference>
<dbReference type="GO" id="GO:0003723">
    <property type="term" value="F:RNA binding"/>
    <property type="evidence" value="ECO:0007669"/>
    <property type="project" value="UniProtKB-KW"/>
</dbReference>
<dbReference type="GO" id="GO:0000179">
    <property type="term" value="F:rRNA (adenine-N6,N6-)-dimethyltransferase activity"/>
    <property type="evidence" value="ECO:0007669"/>
    <property type="project" value="InterPro"/>
</dbReference>
<dbReference type="GO" id="GO:0046677">
    <property type="term" value="P:response to antibiotic"/>
    <property type="evidence" value="ECO:0007669"/>
    <property type="project" value="UniProtKB-KW"/>
</dbReference>
<dbReference type="CDD" id="cd02440">
    <property type="entry name" value="AdoMet_MTases"/>
    <property type="match status" value="1"/>
</dbReference>
<dbReference type="Gene3D" id="1.10.8.100">
    <property type="entry name" value="Ribosomal RNA adenine dimethylase-like, domain 2"/>
    <property type="match status" value="1"/>
</dbReference>
<dbReference type="Gene3D" id="3.40.50.150">
    <property type="entry name" value="Vaccinia Virus protein VP39"/>
    <property type="match status" value="1"/>
</dbReference>
<dbReference type="InterPro" id="IPR001737">
    <property type="entry name" value="KsgA/Erm"/>
</dbReference>
<dbReference type="InterPro" id="IPR023165">
    <property type="entry name" value="rRNA_Ade_diMease-like_C"/>
</dbReference>
<dbReference type="InterPro" id="IPR020596">
    <property type="entry name" value="rRNA_Ade_Mease_Trfase_CS"/>
</dbReference>
<dbReference type="InterPro" id="IPR020598">
    <property type="entry name" value="rRNA_Ade_methylase_Trfase_N"/>
</dbReference>
<dbReference type="InterPro" id="IPR029063">
    <property type="entry name" value="SAM-dependent_MTases_sf"/>
</dbReference>
<dbReference type="NCBIfam" id="NF000499">
    <property type="entry name" value="Erm23S_rRNA_broad"/>
    <property type="match status" value="1"/>
</dbReference>
<dbReference type="NCBIfam" id="NF045543">
    <property type="entry name" value="erm_G_23S_MT"/>
    <property type="match status" value="1"/>
</dbReference>
<dbReference type="PANTHER" id="PTHR11727">
    <property type="entry name" value="DIMETHYLADENOSINE TRANSFERASE"/>
    <property type="match status" value="1"/>
</dbReference>
<dbReference type="PANTHER" id="PTHR11727:SF7">
    <property type="entry name" value="DIMETHYLADENOSINE TRANSFERASE-RELATED"/>
    <property type="match status" value="1"/>
</dbReference>
<dbReference type="Pfam" id="PF00398">
    <property type="entry name" value="RrnaAD"/>
    <property type="match status" value="1"/>
</dbReference>
<dbReference type="SMART" id="SM00650">
    <property type="entry name" value="rADc"/>
    <property type="match status" value="1"/>
</dbReference>
<dbReference type="SUPFAM" id="SSF53335">
    <property type="entry name" value="S-adenosyl-L-methionine-dependent methyltransferases"/>
    <property type="match status" value="1"/>
</dbReference>
<dbReference type="PROSITE" id="PS01131">
    <property type="entry name" value="RRNA_A_DIMETH"/>
    <property type="match status" value="1"/>
</dbReference>
<dbReference type="PROSITE" id="PS51689">
    <property type="entry name" value="SAM_RNA_A_N6_MT"/>
    <property type="match status" value="1"/>
</dbReference>
<sequence>MNKVNIKDSQNFITSKYHIEKIMNCISLDEKDNIFEIGAGKGHFTAELVKRCNFVTAIEIDSKLCEVTRNKLLNYPNYQIVNDDILKFTFPSHNPYKIFGSIPYNISTNIIRKIVFESSATISYLIVEYGFAKRLLDTNRSLALLLMAEVDISILAKIPRYYFHPKPKVDSALIVLKRKPAKMAFKERKKYETFVMKWVNKEYEKLFTKNQFNKALKHARIYDINNISFEQFVSLFNSYKIFNG</sequence>
<evidence type="ECO:0000255" key="1">
    <source>
        <dbReference type="PROSITE-ProRule" id="PRU01026"/>
    </source>
</evidence>
<name>ERMG_LYSSH</name>
<comment type="function">
    <text>Involved in erythromycin resistance.</text>
</comment>
<comment type="similarity">
    <text evidence="1">Belongs to the class I-like SAM-binding methyltransferase superfamily. rRNA adenine N(6)-methyltransferase family.</text>
</comment>
<accession>P06571</accession>
<keyword id="KW-0046">Antibiotic resistance</keyword>
<keyword id="KW-0489">Methyltransferase</keyword>
<keyword id="KW-0694">RNA-binding</keyword>
<keyword id="KW-0949">S-adenosyl-L-methionine</keyword>
<keyword id="KW-0808">Transferase</keyword>
<feature type="chain" id="PRO_0000101673" description="rRNA adenine N-6-methyltransferase">
    <location>
        <begin position="1"/>
        <end position="244"/>
    </location>
</feature>
<feature type="binding site" evidence="1">
    <location>
        <position position="11"/>
    </location>
    <ligand>
        <name>S-adenosyl-L-methionine</name>
        <dbReference type="ChEBI" id="CHEBI:59789"/>
    </ligand>
</feature>
<feature type="binding site" evidence="1">
    <location>
        <position position="13"/>
    </location>
    <ligand>
        <name>S-adenosyl-L-methionine</name>
        <dbReference type="ChEBI" id="CHEBI:59789"/>
    </ligand>
</feature>
<feature type="binding site" evidence="1">
    <location>
        <position position="38"/>
    </location>
    <ligand>
        <name>S-adenosyl-L-methionine</name>
        <dbReference type="ChEBI" id="CHEBI:59789"/>
    </ligand>
</feature>
<feature type="binding site" evidence="1">
    <location>
        <position position="59"/>
    </location>
    <ligand>
        <name>S-adenosyl-L-methionine</name>
        <dbReference type="ChEBI" id="CHEBI:59789"/>
    </ligand>
</feature>
<feature type="binding site" evidence="1">
    <location>
        <position position="84"/>
    </location>
    <ligand>
        <name>S-adenosyl-L-methionine</name>
        <dbReference type="ChEBI" id="CHEBI:59789"/>
    </ligand>
</feature>
<feature type="binding site" evidence="1">
    <location>
        <position position="101"/>
    </location>
    <ligand>
        <name>S-adenosyl-L-methionine</name>
        <dbReference type="ChEBI" id="CHEBI:59789"/>
    </ligand>
</feature>
<reference key="1">
    <citation type="journal article" date="1987" name="J. Bacteriol.">
        <title>Cloning and analysis of ermG, a new macrolide-lincosamide-streptogramin B resistance element from Bacillus sphaericus.</title>
        <authorList>
            <person name="Monod M."/>
            <person name="Mohan S."/>
            <person name="Dubnau D."/>
        </authorList>
    </citation>
    <scope>NUCLEOTIDE SEQUENCE [GENOMIC DNA]</scope>
</reference>
<protein>
    <recommendedName>
        <fullName>rRNA adenine N-6-methyltransferase</fullName>
        <ecNumber evidence="1">2.1.1.-</ecNumber>
    </recommendedName>
    <alternativeName>
        <fullName>Erythromycin resistance protein</fullName>
    </alternativeName>
    <alternativeName>
        <fullName>Macrolide-lincosamide-streptogramin B resistance protein</fullName>
    </alternativeName>
</protein>
<organism>
    <name type="scientific">Lysinibacillus sphaericus</name>
    <name type="common">Bacillus sphaericus</name>
    <dbReference type="NCBI Taxonomy" id="1421"/>
    <lineage>
        <taxon>Bacteria</taxon>
        <taxon>Bacillati</taxon>
        <taxon>Bacillota</taxon>
        <taxon>Bacilli</taxon>
        <taxon>Bacillales</taxon>
        <taxon>Bacillaceae</taxon>
        <taxon>Lysinibacillus</taxon>
    </lineage>
</organism>